<name>FB20_ARATH</name>
<keyword id="KW-1185">Reference proteome</keyword>
<gene>
    <name type="ordered locus">At1g30790</name>
    <name type="ORF">T17H7.6</name>
</gene>
<protein>
    <recommendedName>
        <fullName>F-box protein At1g30790</fullName>
    </recommendedName>
</protein>
<feature type="chain" id="PRO_0000283298" description="F-box protein At1g30790">
    <location>
        <begin position="1"/>
        <end position="399"/>
    </location>
</feature>
<feature type="domain" description="F-box" evidence="1">
    <location>
        <begin position="3"/>
        <end position="49"/>
    </location>
</feature>
<evidence type="ECO:0000255" key="1">
    <source>
        <dbReference type="PROSITE-ProRule" id="PRU00080"/>
    </source>
</evidence>
<evidence type="ECO:0000305" key="2"/>
<comment type="sequence caution" evidence="2">
    <conflict type="erroneous gene model prediction">
        <sequence resource="EMBL-CDS" id="AAD32931"/>
    </conflict>
</comment>
<organism>
    <name type="scientific">Arabidopsis thaliana</name>
    <name type="common">Mouse-ear cress</name>
    <dbReference type="NCBI Taxonomy" id="3702"/>
    <lineage>
        <taxon>Eukaryota</taxon>
        <taxon>Viridiplantae</taxon>
        <taxon>Streptophyta</taxon>
        <taxon>Embryophyta</taxon>
        <taxon>Tracheophyta</taxon>
        <taxon>Spermatophyta</taxon>
        <taxon>Magnoliopsida</taxon>
        <taxon>eudicotyledons</taxon>
        <taxon>Gunneridae</taxon>
        <taxon>Pentapetalae</taxon>
        <taxon>rosids</taxon>
        <taxon>malvids</taxon>
        <taxon>Brassicales</taxon>
        <taxon>Brassicaceae</taxon>
        <taxon>Camelineae</taxon>
        <taxon>Arabidopsis</taxon>
    </lineage>
</organism>
<proteinExistence type="evidence at transcript level"/>
<sequence>MKRQEIDHIPFDLTVEILTRLPAKSLMKFKCVSKLWSSIIHNQSFIDSFYSISSTRPRFIVAFSNGSFPSDKEKRLFIFSSSHEGHESSSSVITNLDTTIPSLTVSNNLASRCISVNGFIACSLYTRFTICNPSTRQVIVLPILPSGRAPDMRSTCIGYDPVDDQFKALALISSCIPNKDSTVEHLVLTLKGDKKNYSWRQIQGNNNIPPYSPVTMRVCINGVVYYGAWTPRQSMNAVIVCFDVRSEKITFIKTPKDVVRWCNDSILMEYKGKLASIVRNRYSRFDTFDLWVLEDIEKQEWSKQTCEIPLSVWDSVENFNMSFPGINKFGEIILAPTCLSGYHLRSFYIFYYHVETKKIRRVRLEGIADDENFRRCYGIGSGQCNVFISPEHVETIRFL</sequence>
<dbReference type="EMBL" id="AC004135">
    <property type="protein sequence ID" value="AAD32931.1"/>
    <property type="status" value="ALT_SEQ"/>
    <property type="molecule type" value="Genomic_DNA"/>
</dbReference>
<dbReference type="EMBL" id="CP002684">
    <property type="protein sequence ID" value="AEE31272.1"/>
    <property type="molecule type" value="Genomic_DNA"/>
</dbReference>
<dbReference type="RefSeq" id="NP_174365.1">
    <property type="nucleotide sequence ID" value="NM_102815.2"/>
</dbReference>
<dbReference type="SMR" id="Q9SY20"/>
<dbReference type="BioGRID" id="25195">
    <property type="interactions" value="11"/>
</dbReference>
<dbReference type="FunCoup" id="Q9SY20">
    <property type="interactions" value="44"/>
</dbReference>
<dbReference type="STRING" id="3702.Q9SY20"/>
<dbReference type="PaxDb" id="3702-AT1G30790.1"/>
<dbReference type="EnsemblPlants" id="AT1G30790.1">
    <property type="protein sequence ID" value="AT1G30790.1"/>
    <property type="gene ID" value="AT1G30790"/>
</dbReference>
<dbReference type="GeneID" id="839960"/>
<dbReference type="Gramene" id="AT1G30790.1">
    <property type="protein sequence ID" value="AT1G30790.1"/>
    <property type="gene ID" value="AT1G30790"/>
</dbReference>
<dbReference type="KEGG" id="ath:AT1G30790"/>
<dbReference type="Araport" id="AT1G30790"/>
<dbReference type="TAIR" id="AT1G30790"/>
<dbReference type="eggNOG" id="ENOG502S9E8">
    <property type="taxonomic scope" value="Eukaryota"/>
</dbReference>
<dbReference type="HOGENOM" id="CLU_027176_8_0_1"/>
<dbReference type="InParanoid" id="Q9SY20"/>
<dbReference type="OMA" id="GLMICNP"/>
<dbReference type="PhylomeDB" id="Q9SY20"/>
<dbReference type="PRO" id="PR:Q9SY20"/>
<dbReference type="Proteomes" id="UP000006548">
    <property type="component" value="Chromosome 1"/>
</dbReference>
<dbReference type="ExpressionAtlas" id="Q9SY20">
    <property type="expression patterns" value="baseline and differential"/>
</dbReference>
<dbReference type="GO" id="GO:0005737">
    <property type="term" value="C:cytoplasm"/>
    <property type="evidence" value="ECO:0000314"/>
    <property type="project" value="TAIR"/>
</dbReference>
<dbReference type="CDD" id="cd22157">
    <property type="entry name" value="F-box_AtFBW1-like"/>
    <property type="match status" value="1"/>
</dbReference>
<dbReference type="Gene3D" id="1.20.1280.50">
    <property type="match status" value="1"/>
</dbReference>
<dbReference type="InterPro" id="IPR013187">
    <property type="entry name" value="F-box-assoc_dom_typ3"/>
</dbReference>
<dbReference type="InterPro" id="IPR017451">
    <property type="entry name" value="F-box-assoc_interact_dom"/>
</dbReference>
<dbReference type="InterPro" id="IPR036047">
    <property type="entry name" value="F-box-like_dom_sf"/>
</dbReference>
<dbReference type="InterPro" id="IPR001810">
    <property type="entry name" value="F-box_dom"/>
</dbReference>
<dbReference type="NCBIfam" id="TIGR01640">
    <property type="entry name" value="F_box_assoc_1"/>
    <property type="match status" value="1"/>
</dbReference>
<dbReference type="PANTHER" id="PTHR31111">
    <property type="entry name" value="BNAA05G37150D PROTEIN-RELATED"/>
    <property type="match status" value="1"/>
</dbReference>
<dbReference type="PANTHER" id="PTHR31111:SF111">
    <property type="entry name" value="F-BOX DOMAIN-CONTAINING PROTEIN"/>
    <property type="match status" value="1"/>
</dbReference>
<dbReference type="Pfam" id="PF00646">
    <property type="entry name" value="F-box"/>
    <property type="match status" value="1"/>
</dbReference>
<dbReference type="Pfam" id="PF08268">
    <property type="entry name" value="FBA_3"/>
    <property type="match status" value="1"/>
</dbReference>
<dbReference type="SMART" id="SM00256">
    <property type="entry name" value="FBOX"/>
    <property type="match status" value="1"/>
</dbReference>
<dbReference type="SUPFAM" id="SSF81383">
    <property type="entry name" value="F-box domain"/>
    <property type="match status" value="1"/>
</dbReference>
<dbReference type="PROSITE" id="PS50181">
    <property type="entry name" value="FBOX"/>
    <property type="match status" value="1"/>
</dbReference>
<reference key="1">
    <citation type="journal article" date="2000" name="Nature">
        <title>Sequence and analysis of chromosome 1 of the plant Arabidopsis thaliana.</title>
        <authorList>
            <person name="Theologis A."/>
            <person name="Ecker J.R."/>
            <person name="Palm C.J."/>
            <person name="Federspiel N.A."/>
            <person name="Kaul S."/>
            <person name="White O."/>
            <person name="Alonso J."/>
            <person name="Altafi H."/>
            <person name="Araujo R."/>
            <person name="Bowman C.L."/>
            <person name="Brooks S.Y."/>
            <person name="Buehler E."/>
            <person name="Chan A."/>
            <person name="Chao Q."/>
            <person name="Chen H."/>
            <person name="Cheuk R.F."/>
            <person name="Chin C.W."/>
            <person name="Chung M.K."/>
            <person name="Conn L."/>
            <person name="Conway A.B."/>
            <person name="Conway A.R."/>
            <person name="Creasy T.H."/>
            <person name="Dewar K."/>
            <person name="Dunn P."/>
            <person name="Etgu P."/>
            <person name="Feldblyum T.V."/>
            <person name="Feng J.-D."/>
            <person name="Fong B."/>
            <person name="Fujii C.Y."/>
            <person name="Gill J.E."/>
            <person name="Goldsmith A.D."/>
            <person name="Haas B."/>
            <person name="Hansen N.F."/>
            <person name="Hughes B."/>
            <person name="Huizar L."/>
            <person name="Hunter J.L."/>
            <person name="Jenkins J."/>
            <person name="Johnson-Hopson C."/>
            <person name="Khan S."/>
            <person name="Khaykin E."/>
            <person name="Kim C.J."/>
            <person name="Koo H.L."/>
            <person name="Kremenetskaia I."/>
            <person name="Kurtz D.B."/>
            <person name="Kwan A."/>
            <person name="Lam B."/>
            <person name="Langin-Hooper S."/>
            <person name="Lee A."/>
            <person name="Lee J.M."/>
            <person name="Lenz C.A."/>
            <person name="Li J.H."/>
            <person name="Li Y.-P."/>
            <person name="Lin X."/>
            <person name="Liu S.X."/>
            <person name="Liu Z.A."/>
            <person name="Luros J.S."/>
            <person name="Maiti R."/>
            <person name="Marziali A."/>
            <person name="Militscher J."/>
            <person name="Miranda M."/>
            <person name="Nguyen M."/>
            <person name="Nierman W.C."/>
            <person name="Osborne B.I."/>
            <person name="Pai G."/>
            <person name="Peterson J."/>
            <person name="Pham P.K."/>
            <person name="Rizzo M."/>
            <person name="Rooney T."/>
            <person name="Rowley D."/>
            <person name="Sakano H."/>
            <person name="Salzberg S.L."/>
            <person name="Schwartz J.R."/>
            <person name="Shinn P."/>
            <person name="Southwick A.M."/>
            <person name="Sun H."/>
            <person name="Tallon L.J."/>
            <person name="Tambunga G."/>
            <person name="Toriumi M.J."/>
            <person name="Town C.D."/>
            <person name="Utterback T."/>
            <person name="Van Aken S."/>
            <person name="Vaysberg M."/>
            <person name="Vysotskaia V.S."/>
            <person name="Walker M."/>
            <person name="Wu D."/>
            <person name="Yu G."/>
            <person name="Fraser C.M."/>
            <person name="Venter J.C."/>
            <person name="Davis R.W."/>
        </authorList>
    </citation>
    <scope>NUCLEOTIDE SEQUENCE [LARGE SCALE GENOMIC DNA]</scope>
    <source>
        <strain>cv. Columbia</strain>
    </source>
</reference>
<reference key="2">
    <citation type="journal article" date="2017" name="Plant J.">
        <title>Araport11: a complete reannotation of the Arabidopsis thaliana reference genome.</title>
        <authorList>
            <person name="Cheng C.Y."/>
            <person name="Krishnakumar V."/>
            <person name="Chan A.P."/>
            <person name="Thibaud-Nissen F."/>
            <person name="Schobel S."/>
            <person name="Town C.D."/>
        </authorList>
    </citation>
    <scope>GENOME REANNOTATION</scope>
    <source>
        <strain>cv. Columbia</strain>
    </source>
</reference>
<accession>Q9SY20</accession>